<proteinExistence type="inferred from homology"/>
<keyword id="KW-0067">ATP-binding</keyword>
<keyword id="KW-0436">Ligase</keyword>
<keyword id="KW-0547">Nucleotide-binding</keyword>
<keyword id="KW-0554">One-carbon metabolism</keyword>
<keyword id="KW-1185">Reference proteome</keyword>
<reference key="1">
    <citation type="journal article" date="2004" name="Environ. Microbiol.">
        <title>The genome of Desulfotalea psychrophila, a sulfate-reducing bacterium from permanently cold Arctic sediments.</title>
        <authorList>
            <person name="Rabus R."/>
            <person name="Ruepp A."/>
            <person name="Frickey T."/>
            <person name="Rattei T."/>
            <person name="Fartmann B."/>
            <person name="Stark M."/>
            <person name="Bauer M."/>
            <person name="Zibat A."/>
            <person name="Lombardot T."/>
            <person name="Becker I."/>
            <person name="Amann J."/>
            <person name="Gellner K."/>
            <person name="Teeling H."/>
            <person name="Leuschner W.D."/>
            <person name="Gloeckner F.-O."/>
            <person name="Lupas A.N."/>
            <person name="Amann R."/>
            <person name="Klenk H.-P."/>
        </authorList>
    </citation>
    <scope>NUCLEOTIDE SEQUENCE [LARGE SCALE GENOMIC DNA]</scope>
    <source>
        <strain>DSM 12343 / LSv54</strain>
    </source>
</reference>
<accession>Q6AL19</accession>
<evidence type="ECO:0000255" key="1">
    <source>
        <dbReference type="HAMAP-Rule" id="MF_01543"/>
    </source>
</evidence>
<organism>
    <name type="scientific">Desulfotalea psychrophila (strain LSv54 / DSM 12343)</name>
    <dbReference type="NCBI Taxonomy" id="177439"/>
    <lineage>
        <taxon>Bacteria</taxon>
        <taxon>Pseudomonadati</taxon>
        <taxon>Thermodesulfobacteriota</taxon>
        <taxon>Desulfobulbia</taxon>
        <taxon>Desulfobulbales</taxon>
        <taxon>Desulfocapsaceae</taxon>
        <taxon>Desulfotalea</taxon>
    </lineage>
</organism>
<sequence length="557" mass="60188">MDLTKEEILPYGHHVAKLDYRKILDRCADRPDGKYIDVTAITPTPLGEGKSTSVMGLVQGLGKRDKSVVGAIRQPSGGPTMNIKGSAAGGGRSQCIPLNEFSLGLTGDINSIMNAHNLGMVALTARMQHEANYTDAQLAQRNLKRLDIHPKKIQFSWIIDFCAQALRNITIGIGGKMDGPTIQSSFAIAVSSELMAILAIANDLADMRARIAKVVVAYDKQDRPITTADLEVDGAMTAWMVQAINPNLMQTLEGQPVLVHAGPFANIAIGQSSVIADRVGLKIAGYNVTESGFGADIGFEKFWNLKCRFSGNKPNCAVIVATIRALKCHGGAPIPVPGKPMPEEYAKENVGWVEEGCKNLLHHINTVKKAGINPVVCINAFYTDRPNEIKAVKRICEHAGARVAVSTHWEHGGDGALEFADAVIDACEEKNDFKFLYELDTPLEKRIELIAKEVYGADGVSYTPEARTKLTQLAKDPEMAELGTCMVKTHLSLSHDPKLKGVPKGWTLPIRDILTYKGAGFVVPVAGAISLMPGTGSDPAYRRVDVDLQTGRVKGVF</sequence>
<comment type="catalytic activity">
    <reaction evidence="1">
        <text>(6S)-5,6,7,8-tetrahydrofolate + formate + ATP = (6R)-10-formyltetrahydrofolate + ADP + phosphate</text>
        <dbReference type="Rhea" id="RHEA:20221"/>
        <dbReference type="ChEBI" id="CHEBI:15740"/>
        <dbReference type="ChEBI" id="CHEBI:30616"/>
        <dbReference type="ChEBI" id="CHEBI:43474"/>
        <dbReference type="ChEBI" id="CHEBI:57453"/>
        <dbReference type="ChEBI" id="CHEBI:195366"/>
        <dbReference type="ChEBI" id="CHEBI:456216"/>
        <dbReference type="EC" id="6.3.4.3"/>
    </reaction>
</comment>
<comment type="pathway">
    <text evidence="1">One-carbon metabolism; tetrahydrofolate interconversion.</text>
</comment>
<comment type="similarity">
    <text evidence="1">Belongs to the formate--tetrahydrofolate ligase family.</text>
</comment>
<gene>
    <name evidence="1" type="primary">fhs</name>
    <name type="ordered locus">DP2227</name>
</gene>
<dbReference type="EC" id="6.3.4.3" evidence="1"/>
<dbReference type="EMBL" id="CR522870">
    <property type="protein sequence ID" value="CAG36956.1"/>
    <property type="molecule type" value="Genomic_DNA"/>
</dbReference>
<dbReference type="SMR" id="Q6AL19"/>
<dbReference type="STRING" id="177439.DP2227"/>
<dbReference type="KEGG" id="dps:DP2227"/>
<dbReference type="eggNOG" id="COG2759">
    <property type="taxonomic scope" value="Bacteria"/>
</dbReference>
<dbReference type="HOGENOM" id="CLU_003601_3_3_7"/>
<dbReference type="UniPathway" id="UPA00193"/>
<dbReference type="Proteomes" id="UP000000602">
    <property type="component" value="Chromosome"/>
</dbReference>
<dbReference type="GO" id="GO:0005524">
    <property type="term" value="F:ATP binding"/>
    <property type="evidence" value="ECO:0007669"/>
    <property type="project" value="UniProtKB-UniRule"/>
</dbReference>
<dbReference type="GO" id="GO:0004329">
    <property type="term" value="F:formate-tetrahydrofolate ligase activity"/>
    <property type="evidence" value="ECO:0007669"/>
    <property type="project" value="UniProtKB-UniRule"/>
</dbReference>
<dbReference type="GO" id="GO:0035999">
    <property type="term" value="P:tetrahydrofolate interconversion"/>
    <property type="evidence" value="ECO:0007669"/>
    <property type="project" value="UniProtKB-UniRule"/>
</dbReference>
<dbReference type="CDD" id="cd00477">
    <property type="entry name" value="FTHFS"/>
    <property type="match status" value="1"/>
</dbReference>
<dbReference type="Gene3D" id="3.30.1510.10">
    <property type="entry name" value="Domain 2, N(10)-formyltetrahydrofolate synthetase"/>
    <property type="match status" value="1"/>
</dbReference>
<dbReference type="Gene3D" id="3.10.410.10">
    <property type="entry name" value="Formyltetrahydrofolate synthetase, domain 3"/>
    <property type="match status" value="1"/>
</dbReference>
<dbReference type="Gene3D" id="3.40.50.300">
    <property type="entry name" value="P-loop containing nucleotide triphosphate hydrolases"/>
    <property type="match status" value="1"/>
</dbReference>
<dbReference type="HAMAP" id="MF_01543">
    <property type="entry name" value="FTHFS"/>
    <property type="match status" value="1"/>
</dbReference>
<dbReference type="InterPro" id="IPR000559">
    <property type="entry name" value="Formate_THF_ligase"/>
</dbReference>
<dbReference type="InterPro" id="IPR020628">
    <property type="entry name" value="Formate_THF_ligase_CS"/>
</dbReference>
<dbReference type="InterPro" id="IPR027417">
    <property type="entry name" value="P-loop_NTPase"/>
</dbReference>
<dbReference type="NCBIfam" id="NF010032">
    <property type="entry name" value="PRK13507.1"/>
    <property type="match status" value="1"/>
</dbReference>
<dbReference type="Pfam" id="PF01268">
    <property type="entry name" value="FTHFS"/>
    <property type="match status" value="1"/>
</dbReference>
<dbReference type="SUPFAM" id="SSF52540">
    <property type="entry name" value="P-loop containing nucleoside triphosphate hydrolases"/>
    <property type="match status" value="1"/>
</dbReference>
<dbReference type="PROSITE" id="PS00721">
    <property type="entry name" value="FTHFS_1"/>
    <property type="match status" value="1"/>
</dbReference>
<dbReference type="PROSITE" id="PS00722">
    <property type="entry name" value="FTHFS_2"/>
    <property type="match status" value="1"/>
</dbReference>
<protein>
    <recommendedName>
        <fullName evidence="1">Formate--tetrahydrofolate ligase</fullName>
        <ecNumber evidence="1">6.3.4.3</ecNumber>
    </recommendedName>
    <alternativeName>
        <fullName evidence="1">Formyltetrahydrofolate synthetase</fullName>
        <shortName evidence="1">FHS</shortName>
        <shortName evidence="1">FTHFS</shortName>
    </alternativeName>
</protein>
<feature type="chain" id="PRO_0000199346" description="Formate--tetrahydrofolate ligase">
    <location>
        <begin position="1"/>
        <end position="557"/>
    </location>
</feature>
<feature type="binding site" evidence="1">
    <location>
        <begin position="44"/>
        <end position="51"/>
    </location>
    <ligand>
        <name>ATP</name>
        <dbReference type="ChEBI" id="CHEBI:30616"/>
    </ligand>
</feature>
<name>FTHS_DESPS</name>